<protein>
    <recommendedName>
        <fullName evidence="2">L-lactate dehydrogenase 2</fullName>
        <shortName evidence="2">L-LDH 2</shortName>
        <ecNumber evidence="2">1.1.1.27</ecNumber>
    </recommendedName>
</protein>
<proteinExistence type="inferred from homology"/>
<evidence type="ECO:0000250" key="1">
    <source>
        <dbReference type="UniProtKB" id="Q5HCV0"/>
    </source>
</evidence>
<evidence type="ECO:0000255" key="2">
    <source>
        <dbReference type="HAMAP-Rule" id="MF_00488"/>
    </source>
</evidence>
<evidence type="ECO:0000305" key="3"/>
<accession>Q2FDQ7</accession>
<reference key="1">
    <citation type="journal article" date="2006" name="Lancet">
        <title>Complete genome sequence of USA300, an epidemic clone of community-acquired meticillin-resistant Staphylococcus aureus.</title>
        <authorList>
            <person name="Diep B.A."/>
            <person name="Gill S.R."/>
            <person name="Chang R.F."/>
            <person name="Phan T.H."/>
            <person name="Chen J.H."/>
            <person name="Davidson M.G."/>
            <person name="Lin F."/>
            <person name="Lin J."/>
            <person name="Carleton H.A."/>
            <person name="Mongodin E.F."/>
            <person name="Sensabaugh G.F."/>
            <person name="Perdreau-Remington F."/>
        </authorList>
    </citation>
    <scope>NUCLEOTIDE SEQUENCE [LARGE SCALE GENOMIC DNA]</scope>
    <source>
        <strain>USA300</strain>
    </source>
</reference>
<dbReference type="EC" id="1.1.1.27" evidence="2"/>
<dbReference type="EMBL" id="CP000255">
    <property type="protein sequence ID" value="ABD22153.1"/>
    <property type="molecule type" value="Genomic_DNA"/>
</dbReference>
<dbReference type="RefSeq" id="WP_000846637.1">
    <property type="nucleotide sequence ID" value="NZ_CP027476.1"/>
</dbReference>
<dbReference type="SMR" id="Q2FDQ7"/>
<dbReference type="KEGG" id="saa:SAUSA300_2537"/>
<dbReference type="HOGENOM" id="CLU_045401_1_1_9"/>
<dbReference type="UniPathway" id="UPA00554">
    <property type="reaction ID" value="UER00611"/>
</dbReference>
<dbReference type="Proteomes" id="UP000001939">
    <property type="component" value="Chromosome"/>
</dbReference>
<dbReference type="GO" id="GO:0005737">
    <property type="term" value="C:cytoplasm"/>
    <property type="evidence" value="ECO:0007669"/>
    <property type="project" value="UniProtKB-SubCell"/>
</dbReference>
<dbReference type="GO" id="GO:0004459">
    <property type="term" value="F:L-lactate dehydrogenase activity"/>
    <property type="evidence" value="ECO:0007669"/>
    <property type="project" value="UniProtKB-UniRule"/>
</dbReference>
<dbReference type="GO" id="GO:0006096">
    <property type="term" value="P:glycolytic process"/>
    <property type="evidence" value="ECO:0007669"/>
    <property type="project" value="UniProtKB-UniRule"/>
</dbReference>
<dbReference type="GO" id="GO:0006089">
    <property type="term" value="P:lactate metabolic process"/>
    <property type="evidence" value="ECO:0007669"/>
    <property type="project" value="TreeGrafter"/>
</dbReference>
<dbReference type="CDD" id="cd05291">
    <property type="entry name" value="HicDH_like"/>
    <property type="match status" value="1"/>
</dbReference>
<dbReference type="FunFam" id="3.40.50.720:FF:000018">
    <property type="entry name" value="Malate dehydrogenase"/>
    <property type="match status" value="1"/>
</dbReference>
<dbReference type="Gene3D" id="3.90.110.10">
    <property type="entry name" value="Lactate dehydrogenase/glycoside hydrolase, family 4, C-terminal"/>
    <property type="match status" value="1"/>
</dbReference>
<dbReference type="Gene3D" id="3.40.50.720">
    <property type="entry name" value="NAD(P)-binding Rossmann-like Domain"/>
    <property type="match status" value="1"/>
</dbReference>
<dbReference type="HAMAP" id="MF_00488">
    <property type="entry name" value="Lactate_dehydrog"/>
    <property type="match status" value="1"/>
</dbReference>
<dbReference type="InterPro" id="IPR001557">
    <property type="entry name" value="L-lactate/malate_DH"/>
</dbReference>
<dbReference type="InterPro" id="IPR011304">
    <property type="entry name" value="L-lactate_DH"/>
</dbReference>
<dbReference type="InterPro" id="IPR018177">
    <property type="entry name" value="L-lactate_DH_AS"/>
</dbReference>
<dbReference type="InterPro" id="IPR022383">
    <property type="entry name" value="Lactate/malate_DH_C"/>
</dbReference>
<dbReference type="InterPro" id="IPR001236">
    <property type="entry name" value="Lactate/malate_DH_N"/>
</dbReference>
<dbReference type="InterPro" id="IPR015955">
    <property type="entry name" value="Lactate_DH/Glyco_Ohase_4_C"/>
</dbReference>
<dbReference type="InterPro" id="IPR036291">
    <property type="entry name" value="NAD(P)-bd_dom_sf"/>
</dbReference>
<dbReference type="NCBIfam" id="TIGR01771">
    <property type="entry name" value="L-LDH-NAD"/>
    <property type="match status" value="1"/>
</dbReference>
<dbReference type="NCBIfam" id="NF000824">
    <property type="entry name" value="PRK00066.1"/>
    <property type="match status" value="1"/>
</dbReference>
<dbReference type="PANTHER" id="PTHR43128">
    <property type="entry name" value="L-2-HYDROXYCARBOXYLATE DEHYDROGENASE (NAD(P)(+))"/>
    <property type="match status" value="1"/>
</dbReference>
<dbReference type="PANTHER" id="PTHR43128:SF16">
    <property type="entry name" value="L-LACTATE DEHYDROGENASE"/>
    <property type="match status" value="1"/>
</dbReference>
<dbReference type="Pfam" id="PF02866">
    <property type="entry name" value="Ldh_1_C"/>
    <property type="match status" value="1"/>
</dbReference>
<dbReference type="Pfam" id="PF00056">
    <property type="entry name" value="Ldh_1_N"/>
    <property type="match status" value="1"/>
</dbReference>
<dbReference type="PIRSF" id="PIRSF000102">
    <property type="entry name" value="Lac_mal_DH"/>
    <property type="match status" value="1"/>
</dbReference>
<dbReference type="PRINTS" id="PR00086">
    <property type="entry name" value="LLDHDRGNASE"/>
</dbReference>
<dbReference type="SUPFAM" id="SSF56327">
    <property type="entry name" value="LDH C-terminal domain-like"/>
    <property type="match status" value="1"/>
</dbReference>
<dbReference type="SUPFAM" id="SSF51735">
    <property type="entry name" value="NAD(P)-binding Rossmann-fold domains"/>
    <property type="match status" value="1"/>
</dbReference>
<dbReference type="PROSITE" id="PS00064">
    <property type="entry name" value="L_LDH"/>
    <property type="match status" value="1"/>
</dbReference>
<feature type="chain" id="PRO_0000237560" description="L-lactate dehydrogenase 2">
    <location>
        <begin position="1"/>
        <end position="319"/>
    </location>
</feature>
<feature type="active site" description="Proton acceptor" evidence="2">
    <location>
        <position position="178"/>
    </location>
</feature>
<feature type="binding site" evidence="2">
    <location>
        <position position="16"/>
    </location>
    <ligand>
        <name>NAD(+)</name>
        <dbReference type="ChEBI" id="CHEBI:57540"/>
    </ligand>
</feature>
<feature type="binding site" evidence="2">
    <location>
        <position position="37"/>
    </location>
    <ligand>
        <name>NAD(+)</name>
        <dbReference type="ChEBI" id="CHEBI:57540"/>
    </ligand>
</feature>
<feature type="binding site" evidence="2">
    <location>
        <position position="42"/>
    </location>
    <ligand>
        <name>NAD(+)</name>
        <dbReference type="ChEBI" id="CHEBI:57540"/>
    </ligand>
</feature>
<feature type="binding site" evidence="2">
    <location>
        <position position="68"/>
    </location>
    <ligand>
        <name>NAD(+)</name>
        <dbReference type="ChEBI" id="CHEBI:57540"/>
    </ligand>
</feature>
<feature type="binding site" evidence="2">
    <location>
        <begin position="82"/>
        <end position="83"/>
    </location>
    <ligand>
        <name>NAD(+)</name>
        <dbReference type="ChEBI" id="CHEBI:57540"/>
    </ligand>
</feature>
<feature type="binding site" evidence="2">
    <location>
        <position position="85"/>
    </location>
    <ligand>
        <name>substrate</name>
    </ligand>
</feature>
<feature type="binding site" evidence="2">
    <location>
        <position position="91"/>
    </location>
    <ligand>
        <name>substrate</name>
    </ligand>
</feature>
<feature type="binding site" evidence="2">
    <location>
        <position position="104"/>
    </location>
    <ligand>
        <name>NAD(+)</name>
        <dbReference type="ChEBI" id="CHEBI:57540"/>
    </ligand>
</feature>
<feature type="binding site" evidence="2">
    <location>
        <begin position="121"/>
        <end position="123"/>
    </location>
    <ligand>
        <name>NAD(+)</name>
        <dbReference type="ChEBI" id="CHEBI:57540"/>
    </ligand>
</feature>
<feature type="binding site" evidence="2">
    <location>
        <begin position="123"/>
        <end position="126"/>
    </location>
    <ligand>
        <name>substrate</name>
    </ligand>
</feature>
<feature type="binding site" evidence="2">
    <location>
        <position position="146"/>
    </location>
    <ligand>
        <name>NAD(+)</name>
        <dbReference type="ChEBI" id="CHEBI:57540"/>
    </ligand>
</feature>
<feature type="binding site" evidence="2">
    <location>
        <begin position="151"/>
        <end position="154"/>
    </location>
    <ligand>
        <name>substrate</name>
    </ligand>
</feature>
<feature type="binding site" evidence="2">
    <location>
        <position position="231"/>
    </location>
    <ligand>
        <name>substrate</name>
    </ligand>
</feature>
<feature type="modified residue" description="Phosphotyrosine" evidence="2">
    <location>
        <position position="222"/>
    </location>
</feature>
<name>LDH2_STAA3</name>
<gene>
    <name evidence="2" type="primary">ldh2</name>
    <name type="ordered locus">SAUSA300_2537</name>
</gene>
<sequence>MKTFGKKVVLIGDGSVGSSYAFAMVTQGVADEFVIIDIAKDKVKADVQDLNHGTVHSPSPVDVKAGEYEDCKDADLVVITAGAPQKPGETRLQLVEKNTKIMKSIVKSVMDSGFDGYFLIAANPVDILTRFVKEYTGLPAERVIGSGTVLDSARLQYLISQELGVAPSSVDASIIGEHGDTELAVWSQANVAGISVYDTLKEQTGSEAKAEEIYVNTRDAAYEIIQAKGSTYYGIALALMRISKAILNNENNVLNVSIQLDGQYGGHKGVYLGVPTLVNQHGAVKIYEMPLSAEEQALFDKSVKTLEDTFDSIKYLLED</sequence>
<comment type="function">
    <text evidence="1 2">Catalyzes the conversion of lactate to pyruvate (Potential). Contributes to S.aureus growth during nitrosative stress in both aerobically and anaerobically cultured cells, despite playing a secondary role in this resistance mechanism (By similarity).</text>
</comment>
<comment type="catalytic activity">
    <reaction evidence="2">
        <text>(S)-lactate + NAD(+) = pyruvate + NADH + H(+)</text>
        <dbReference type="Rhea" id="RHEA:23444"/>
        <dbReference type="ChEBI" id="CHEBI:15361"/>
        <dbReference type="ChEBI" id="CHEBI:15378"/>
        <dbReference type="ChEBI" id="CHEBI:16651"/>
        <dbReference type="ChEBI" id="CHEBI:57540"/>
        <dbReference type="ChEBI" id="CHEBI:57945"/>
        <dbReference type="EC" id="1.1.1.27"/>
    </reaction>
</comment>
<comment type="pathway">
    <text evidence="2">Fermentation; pyruvate fermentation to lactate; (S)-lactate from pyruvate: step 1/1.</text>
</comment>
<comment type="subunit">
    <text evidence="2">Homotetramer.</text>
</comment>
<comment type="subcellular location">
    <subcellularLocation>
        <location evidence="2">Cytoplasm</location>
    </subcellularLocation>
</comment>
<comment type="similarity">
    <text evidence="2 3">Belongs to the LDH/MDH superfamily. LDH family.</text>
</comment>
<keyword id="KW-0963">Cytoplasm</keyword>
<keyword id="KW-0520">NAD</keyword>
<keyword id="KW-0560">Oxidoreductase</keyword>
<keyword id="KW-0597">Phosphoprotein</keyword>
<keyword id="KW-0346">Stress response</keyword>
<organism>
    <name type="scientific">Staphylococcus aureus (strain USA300)</name>
    <dbReference type="NCBI Taxonomy" id="367830"/>
    <lineage>
        <taxon>Bacteria</taxon>
        <taxon>Bacillati</taxon>
        <taxon>Bacillota</taxon>
        <taxon>Bacilli</taxon>
        <taxon>Bacillales</taxon>
        <taxon>Staphylococcaceae</taxon>
        <taxon>Staphylococcus</taxon>
    </lineage>
</organism>